<proteinExistence type="evidence at protein level"/>
<comment type="function">
    <text evidence="4 5 6 7">Metallocarboxypeptidase that catalyzes the removing of polyglutamate side chains that are present on the gamma-carboxyl group of glutamate residues of tubulin in sensory cilia (PubMed:17244817, PubMed:20519502). Probably via the deglutamylation of tubulin, promotes microtubule stability required for axon regrowth after injury (PubMed:23000142). Also regulates microtubule dynamics in uterine muscle cells (PubMed:24780738).</text>
</comment>
<comment type="catalytic activity">
    <reaction evidence="10">
        <text>(L-glutamyl)(n+1)-gamma-L-glutamyl-L-glutamyl-[protein] + H2O = (L-glutamyl)(n)-gamma-L-glutamyl-L-glutamyl-[protein] + L-glutamate</text>
        <dbReference type="Rhea" id="RHEA:60004"/>
        <dbReference type="Rhea" id="RHEA-COMP:15519"/>
        <dbReference type="Rhea" id="RHEA-COMP:15675"/>
        <dbReference type="ChEBI" id="CHEBI:15377"/>
        <dbReference type="ChEBI" id="CHEBI:29985"/>
        <dbReference type="ChEBI" id="CHEBI:143623"/>
    </reaction>
</comment>
<comment type="cofactor">
    <cofactor evidence="1">
        <name>Zn(2+)</name>
        <dbReference type="ChEBI" id="CHEBI:29105"/>
    </cofactor>
    <text evidence="1">Binds 1 zinc ion per subunit.</text>
</comment>
<comment type="subcellular location">
    <subcellularLocation>
        <location evidence="2">Cytoplasm</location>
    </subcellularLocation>
</comment>
<comment type="tissue specificity">
    <text evidence="5">Expressed in labial and amphid neurons.</text>
</comment>
<comment type="disruption phenotype">
    <text evidence="7">RNAi-mediated knockdown at the L1 or L4 larval stages or in the egg-laying apparatus causes a reduction in egg-laying due to a defect in the egg-laying apparatus muscles.</text>
</comment>
<comment type="similarity">
    <text evidence="9">Belongs to the peptidase M14 family.</text>
</comment>
<organism>
    <name type="scientific">Caenorhabditis elegans</name>
    <dbReference type="NCBI Taxonomy" id="6239"/>
    <lineage>
        <taxon>Eukaryota</taxon>
        <taxon>Metazoa</taxon>
        <taxon>Ecdysozoa</taxon>
        <taxon>Nematoda</taxon>
        <taxon>Chromadorea</taxon>
        <taxon>Rhabditida</taxon>
        <taxon>Rhabditina</taxon>
        <taxon>Rhabditomorpha</taxon>
        <taxon>Rhabditoidea</taxon>
        <taxon>Rhabditidae</taxon>
        <taxon>Peloderinae</taxon>
        <taxon>Caenorhabditis</taxon>
    </lineage>
</organism>
<evidence type="ECO:0000250" key="1">
    <source>
        <dbReference type="UniProtKB" id="P00730"/>
    </source>
</evidence>
<evidence type="ECO:0000250" key="2">
    <source>
        <dbReference type="UniProtKB" id="Q09LZ8"/>
    </source>
</evidence>
<evidence type="ECO:0000255" key="3">
    <source>
        <dbReference type="PROSITE-ProRule" id="PRU01379"/>
    </source>
</evidence>
<evidence type="ECO:0000269" key="4">
    <source>
    </source>
</evidence>
<evidence type="ECO:0000269" key="5">
    <source>
    </source>
</evidence>
<evidence type="ECO:0000269" key="6">
    <source>
    </source>
</evidence>
<evidence type="ECO:0000269" key="7">
    <source>
    </source>
</evidence>
<evidence type="ECO:0000303" key="8">
    <source>
    </source>
</evidence>
<evidence type="ECO:0000305" key="9"/>
<evidence type="ECO:0000305" key="10">
    <source>
    </source>
</evidence>
<evidence type="ECO:0000312" key="11">
    <source>
        <dbReference type="WormBase" id="EEED8.6"/>
    </source>
</evidence>
<reference key="1">
    <citation type="journal article" date="1998" name="Science">
        <title>Genome sequence of the nematode C. elegans: a platform for investigating biology.</title>
        <authorList>
            <consortium name="The C. elegans sequencing consortium"/>
        </authorList>
    </citation>
    <scope>NUCLEOTIDE SEQUENCE [LARGE SCALE GENOMIC DNA]</scope>
    <source>
        <strain>Bristol N2</strain>
    </source>
</reference>
<reference key="2">
    <citation type="journal article" date="2007" name="FASEB J.">
        <title>Nna1-like proteins are active metallocarboxypeptidases of a new and diverse M14 subfamily.</title>
        <authorList>
            <person name="Rodriguez de la Vega M."/>
            <person name="Sevilla R.G."/>
            <person name="Hermoso A."/>
            <person name="Lorenzo J."/>
            <person name="Tanco S."/>
            <person name="Diez A."/>
            <person name="Fricker L.D."/>
            <person name="Bautista J.M."/>
            <person name="Aviles F.X."/>
        </authorList>
    </citation>
    <scope>FUNCTION</scope>
    <scope>CATALYTIC ACTIVITY</scope>
</reference>
<reference key="3">
    <citation type="journal article" date="2010" name="J. Biol. Chem.">
        <title>Identification of tubulin deglutamylase among Caenorhabditis elegans and mammalian cytosolic carboxypeptidases (CCPs).</title>
        <authorList>
            <person name="Kimura Y."/>
            <person name="Kurabe N."/>
            <person name="Ikegami K."/>
            <person name="Tsutsumi K."/>
            <person name="Konishi Y."/>
            <person name="Kaplan O.I."/>
            <person name="Kunitomo H."/>
            <person name="Iino Y."/>
            <person name="Blacque O.E."/>
            <person name="Setou M."/>
        </authorList>
    </citation>
    <scope>FUNCTION</scope>
    <scope>CATALYTIC ACTIVITY</scope>
    <scope>TISSUE SPECIFICITY</scope>
</reference>
<reference key="4">
    <citation type="journal article" date="2012" name="Dev. Cell">
        <title>Kinesin-13 and tubulin posttranslational modifications regulate microtubule growth in axon regeneration.</title>
        <authorList>
            <person name="Ghosh-Roy A."/>
            <person name="Goncharov A."/>
            <person name="Jin Y."/>
            <person name="Chisholm A.D."/>
        </authorList>
    </citation>
    <scope>FUNCTION</scope>
</reference>
<reference key="5">
    <citation type="journal article" date="2014" name="Dev. Cell">
        <title>In situ imaging in C. elegans reveals developmental regulation of microtubule dynamics.</title>
        <authorList>
            <person name="Lacroix B."/>
            <person name="Bourdages K.G."/>
            <person name="Dorn J.F."/>
            <person name="Ihara S."/>
            <person name="Sherwood D.R."/>
            <person name="Maddox P.S."/>
            <person name="Maddox A.S."/>
        </authorList>
    </citation>
    <scope>FUNCTION</scope>
    <scope>DISRUPTION PHENOTYPE</scope>
</reference>
<keyword id="KW-0121">Carboxypeptidase</keyword>
<keyword id="KW-0963">Cytoplasm</keyword>
<keyword id="KW-0378">Hydrolase</keyword>
<keyword id="KW-0479">Metal-binding</keyword>
<keyword id="KW-0482">Metalloprotease</keyword>
<keyword id="KW-0645">Protease</keyword>
<keyword id="KW-1185">Reference proteome</keyword>
<keyword id="KW-0862">Zinc</keyword>
<name>CBPC6_CAEEL</name>
<dbReference type="EC" id="3.4.17.-" evidence="4 10"/>
<dbReference type="EMBL" id="BX284602">
    <property type="protein sequence ID" value="CCD68733.1"/>
    <property type="molecule type" value="Genomic_DNA"/>
</dbReference>
<dbReference type="PIR" id="T15916">
    <property type="entry name" value="T15916"/>
</dbReference>
<dbReference type="RefSeq" id="NP_495012.2">
    <property type="nucleotide sequence ID" value="NM_062611.6"/>
</dbReference>
<dbReference type="SMR" id="Q09296"/>
<dbReference type="BioGRID" id="48845">
    <property type="interactions" value="2"/>
</dbReference>
<dbReference type="DIP" id="DIP-26727N"/>
<dbReference type="FunCoup" id="Q09296">
    <property type="interactions" value="142"/>
</dbReference>
<dbReference type="STRING" id="6239.EEED8.6.1"/>
<dbReference type="MEROPS" id="M14.A31"/>
<dbReference type="PaxDb" id="6239-EEED8.6"/>
<dbReference type="EnsemblMetazoa" id="EEED8.6.1">
    <property type="protein sequence ID" value="EEED8.6.1"/>
    <property type="gene ID" value="WBGene00017136"/>
</dbReference>
<dbReference type="GeneID" id="184043"/>
<dbReference type="KEGG" id="cel:CELE_EEED8.6"/>
<dbReference type="UCSC" id="EEED8.6">
    <property type="organism name" value="c. elegans"/>
</dbReference>
<dbReference type="AGR" id="WB:WBGene00017136"/>
<dbReference type="CTD" id="184043"/>
<dbReference type="WormBase" id="EEED8.6">
    <property type="protein sequence ID" value="CE40199"/>
    <property type="gene ID" value="WBGene00017136"/>
    <property type="gene designation" value="ccpp-6"/>
</dbReference>
<dbReference type="eggNOG" id="KOG3641">
    <property type="taxonomic scope" value="Eukaryota"/>
</dbReference>
<dbReference type="GeneTree" id="ENSGT00940000155042"/>
<dbReference type="HOGENOM" id="CLU_007523_6_1_1"/>
<dbReference type="InParanoid" id="Q09296"/>
<dbReference type="OMA" id="WFAYFEP"/>
<dbReference type="OrthoDB" id="10253041at2759"/>
<dbReference type="PhylomeDB" id="Q09296"/>
<dbReference type="BRENDA" id="3.4.17.24">
    <property type="organism ID" value="1045"/>
</dbReference>
<dbReference type="PRO" id="PR:Q09296"/>
<dbReference type="Proteomes" id="UP000001940">
    <property type="component" value="Chromosome II"/>
</dbReference>
<dbReference type="Bgee" id="WBGene00017136">
    <property type="expression patterns" value="Expressed in larva"/>
</dbReference>
<dbReference type="GO" id="GO:0036064">
    <property type="term" value="C:ciliary basal body"/>
    <property type="evidence" value="ECO:0000318"/>
    <property type="project" value="GO_Central"/>
</dbReference>
<dbReference type="GO" id="GO:0005737">
    <property type="term" value="C:cytoplasm"/>
    <property type="evidence" value="ECO:0000318"/>
    <property type="project" value="GO_Central"/>
</dbReference>
<dbReference type="GO" id="GO:0015630">
    <property type="term" value="C:microtubule cytoskeleton"/>
    <property type="evidence" value="ECO:0000318"/>
    <property type="project" value="GO_Central"/>
</dbReference>
<dbReference type="GO" id="GO:0004181">
    <property type="term" value="F:metallocarboxypeptidase activity"/>
    <property type="evidence" value="ECO:0000314"/>
    <property type="project" value="WormBase"/>
</dbReference>
<dbReference type="GO" id="GO:0015631">
    <property type="term" value="F:tubulin binding"/>
    <property type="evidence" value="ECO:0000318"/>
    <property type="project" value="GO_Central"/>
</dbReference>
<dbReference type="GO" id="GO:0008270">
    <property type="term" value="F:zinc ion binding"/>
    <property type="evidence" value="ECO:0007669"/>
    <property type="project" value="InterPro"/>
</dbReference>
<dbReference type="GO" id="GO:0018991">
    <property type="term" value="P:egg-laying behavior"/>
    <property type="evidence" value="ECO:0000315"/>
    <property type="project" value="WormBase"/>
</dbReference>
<dbReference type="GO" id="GO:0035608">
    <property type="term" value="P:protein deglutamylation"/>
    <property type="evidence" value="ECO:0000315"/>
    <property type="project" value="UniProtKB"/>
</dbReference>
<dbReference type="GO" id="GO:0006508">
    <property type="term" value="P:proteolysis"/>
    <property type="evidence" value="ECO:0000314"/>
    <property type="project" value="WormBase"/>
</dbReference>
<dbReference type="CDD" id="cd06908">
    <property type="entry name" value="M14_AGBL4_like"/>
    <property type="match status" value="1"/>
</dbReference>
<dbReference type="Gene3D" id="2.60.40.3120">
    <property type="match status" value="1"/>
</dbReference>
<dbReference type="Gene3D" id="3.40.630.10">
    <property type="entry name" value="Zn peptidases"/>
    <property type="match status" value="1"/>
</dbReference>
<dbReference type="InterPro" id="IPR050821">
    <property type="entry name" value="Cytosolic_carboxypeptidase"/>
</dbReference>
<dbReference type="InterPro" id="IPR040626">
    <property type="entry name" value="Pepdidase_M14_N"/>
</dbReference>
<dbReference type="InterPro" id="IPR000834">
    <property type="entry name" value="Peptidase_M14"/>
</dbReference>
<dbReference type="PANTHER" id="PTHR12756">
    <property type="entry name" value="CYTOSOLIC CARBOXYPEPTIDASE"/>
    <property type="match status" value="1"/>
</dbReference>
<dbReference type="PANTHER" id="PTHR12756:SF9">
    <property type="entry name" value="CYTOSOLIC CARBOXYPEPTIDASE 6"/>
    <property type="match status" value="1"/>
</dbReference>
<dbReference type="Pfam" id="PF18027">
    <property type="entry name" value="Pepdidase_M14_N"/>
    <property type="match status" value="1"/>
</dbReference>
<dbReference type="Pfam" id="PF00246">
    <property type="entry name" value="Peptidase_M14"/>
    <property type="match status" value="1"/>
</dbReference>
<dbReference type="SUPFAM" id="SSF53187">
    <property type="entry name" value="Zn-dependent exopeptidases"/>
    <property type="match status" value="1"/>
</dbReference>
<dbReference type="PROSITE" id="PS52035">
    <property type="entry name" value="PEPTIDASE_M14"/>
    <property type="match status" value="1"/>
</dbReference>
<protein>
    <recommendedName>
        <fullName>Cytosolic carboxypeptidase 6</fullName>
        <ecNumber evidence="4 10">3.4.17.-</ecNumber>
    </recommendedName>
    <alternativeName>
        <fullName>ATP/GTP-binding protein-like 4 homolog</fullName>
        <shortName>CeAGBL4</shortName>
    </alternativeName>
</protein>
<sequence length="459" mass="53241">MGYVGNVSYPDTIPGQGNLVFEASFESGNLGRVDKVSCSEYDLFIRPDTLNNKYRVWFYFECKNASENQRAIFNIVNFSKQRTLFEMGIAAPVVKSNAQNSWARIPSRHIYYYRSSQHNDRWILSFAFIFESPDPVQFAYCIPYTYGQMQIWLNELESRKYPFFHRDLLVQTVQKRRVDLITIDATPDTFQGSKKMIFLTARVHPGESPSSHVMHGIIEFLVSKDDRAQKLRKVYCFKIIPMLNPDGVFLGNYRCSLMGHDLNRMWRTPSDWAHPSIYAVKNLLTQYDNNPQAQTVIYVDLHAHSQKPNCFLYGNVNMSAVEEKSTFRQLWLPHLLADLSEDYSLEFTQFNTDVEKAGTGRRTMGDLLSCLCYTLEVSFFSYRHTDSSGNGIQHCTPYLQYKYEALGEAFCRALLNFYEADCGLREIVLERPFKTFLPARAQKTLKKQARKVIQTVMMK</sequence>
<gene>
    <name evidence="11" type="primary">ccpp-6</name>
    <name evidence="8" type="synonym">Nnac2</name>
    <name evidence="11" type="ORF">EEED8.6</name>
</gene>
<accession>Q09296</accession>
<feature type="chain" id="PRO_0000065272" description="Cytosolic carboxypeptidase 6">
    <location>
        <begin position="1"/>
        <end position="459"/>
    </location>
</feature>
<feature type="domain" description="Peptidase M14" evidence="3">
    <location>
        <begin position="142"/>
        <end position="418"/>
    </location>
</feature>
<feature type="active site" description="Proton donor/acceptor" evidence="3">
    <location>
        <position position="376"/>
    </location>
</feature>
<feature type="binding site" evidence="3">
    <location>
        <position position="204"/>
    </location>
    <ligand>
        <name>Zn(2+)</name>
        <dbReference type="ChEBI" id="CHEBI:29105"/>
        <note>catalytic</note>
    </ligand>
</feature>
<feature type="binding site" evidence="3">
    <location>
        <position position="207"/>
    </location>
    <ligand>
        <name>Zn(2+)</name>
        <dbReference type="ChEBI" id="CHEBI:29105"/>
        <note>catalytic</note>
    </ligand>
</feature>
<feature type="binding site" evidence="3">
    <location>
        <position position="302"/>
    </location>
    <ligand>
        <name>Zn(2+)</name>
        <dbReference type="ChEBI" id="CHEBI:29105"/>
        <note>catalytic</note>
    </ligand>
</feature>